<organism>
    <name type="scientific">Escherichia coli O81 (strain ED1a)</name>
    <dbReference type="NCBI Taxonomy" id="585397"/>
    <lineage>
        <taxon>Bacteria</taxon>
        <taxon>Pseudomonadati</taxon>
        <taxon>Pseudomonadota</taxon>
        <taxon>Gammaproteobacteria</taxon>
        <taxon>Enterobacterales</taxon>
        <taxon>Enterobacteriaceae</taxon>
        <taxon>Escherichia</taxon>
    </lineage>
</organism>
<protein>
    <recommendedName>
        <fullName evidence="1">UPF0761 membrane protein YihY</fullName>
    </recommendedName>
</protein>
<comment type="subcellular location">
    <subcellularLocation>
        <location evidence="1">Cell inner membrane</location>
        <topology evidence="1">Multi-pass membrane protein</topology>
    </subcellularLocation>
</comment>
<comment type="similarity">
    <text evidence="1">Belongs to the UPF0761 family.</text>
</comment>
<gene>
    <name evidence="1" type="primary">yihY</name>
    <name type="ordered locus">ECED1_4586</name>
</gene>
<keyword id="KW-0997">Cell inner membrane</keyword>
<keyword id="KW-1003">Cell membrane</keyword>
<keyword id="KW-0472">Membrane</keyword>
<keyword id="KW-0812">Transmembrane</keyword>
<keyword id="KW-1133">Transmembrane helix</keyword>
<evidence type="ECO:0000255" key="1">
    <source>
        <dbReference type="HAMAP-Rule" id="MF_00672"/>
    </source>
</evidence>
<feature type="chain" id="PRO_1000147669" description="UPF0761 membrane protein YihY">
    <location>
        <begin position="1"/>
        <end position="290"/>
    </location>
</feature>
<feature type="transmembrane region" description="Helical" evidence="1">
    <location>
        <begin position="44"/>
        <end position="64"/>
    </location>
</feature>
<feature type="transmembrane region" description="Helical" evidence="1">
    <location>
        <begin position="104"/>
        <end position="124"/>
    </location>
</feature>
<feature type="transmembrane region" description="Helical" evidence="1">
    <location>
        <begin position="140"/>
        <end position="160"/>
    </location>
</feature>
<feature type="transmembrane region" description="Helical" evidence="1">
    <location>
        <begin position="183"/>
        <end position="203"/>
    </location>
</feature>
<feature type="transmembrane region" description="Helical" evidence="1">
    <location>
        <begin position="210"/>
        <end position="230"/>
    </location>
</feature>
<feature type="transmembrane region" description="Helical" evidence="1">
    <location>
        <begin position="244"/>
        <end position="264"/>
    </location>
</feature>
<dbReference type="EMBL" id="CU928162">
    <property type="protein sequence ID" value="CAR10696.2"/>
    <property type="molecule type" value="Genomic_DNA"/>
</dbReference>
<dbReference type="RefSeq" id="WP_000920762.1">
    <property type="nucleotide sequence ID" value="NC_011745.1"/>
</dbReference>
<dbReference type="KEGG" id="ecq:ECED1_4586"/>
<dbReference type="HOGENOM" id="CLU_032288_0_0_6"/>
<dbReference type="Proteomes" id="UP000000748">
    <property type="component" value="Chromosome"/>
</dbReference>
<dbReference type="GO" id="GO:0005886">
    <property type="term" value="C:plasma membrane"/>
    <property type="evidence" value="ECO:0007669"/>
    <property type="project" value="UniProtKB-SubCell"/>
</dbReference>
<dbReference type="HAMAP" id="MF_00672">
    <property type="entry name" value="UPF0761"/>
    <property type="match status" value="1"/>
</dbReference>
<dbReference type="InterPro" id="IPR023679">
    <property type="entry name" value="UPF0761_bac"/>
</dbReference>
<dbReference type="InterPro" id="IPR017039">
    <property type="entry name" value="Virul_fac_BrkB"/>
</dbReference>
<dbReference type="NCBIfam" id="NF002457">
    <property type="entry name" value="PRK01637.1"/>
    <property type="match status" value="1"/>
</dbReference>
<dbReference type="NCBIfam" id="TIGR00765">
    <property type="entry name" value="yihY_not_rbn"/>
    <property type="match status" value="1"/>
</dbReference>
<dbReference type="PANTHER" id="PTHR30213">
    <property type="entry name" value="INNER MEMBRANE PROTEIN YHJD"/>
    <property type="match status" value="1"/>
</dbReference>
<dbReference type="PANTHER" id="PTHR30213:SF0">
    <property type="entry name" value="UPF0761 MEMBRANE PROTEIN YIHY"/>
    <property type="match status" value="1"/>
</dbReference>
<dbReference type="Pfam" id="PF03631">
    <property type="entry name" value="Virul_fac_BrkB"/>
    <property type="match status" value="1"/>
</dbReference>
<dbReference type="PIRSF" id="PIRSF035875">
    <property type="entry name" value="RNase_BN"/>
    <property type="match status" value="1"/>
</dbReference>
<reference key="1">
    <citation type="journal article" date="2009" name="PLoS Genet.">
        <title>Organised genome dynamics in the Escherichia coli species results in highly diverse adaptive paths.</title>
        <authorList>
            <person name="Touchon M."/>
            <person name="Hoede C."/>
            <person name="Tenaillon O."/>
            <person name="Barbe V."/>
            <person name="Baeriswyl S."/>
            <person name="Bidet P."/>
            <person name="Bingen E."/>
            <person name="Bonacorsi S."/>
            <person name="Bouchier C."/>
            <person name="Bouvet O."/>
            <person name="Calteau A."/>
            <person name="Chiapello H."/>
            <person name="Clermont O."/>
            <person name="Cruveiller S."/>
            <person name="Danchin A."/>
            <person name="Diard M."/>
            <person name="Dossat C."/>
            <person name="Karoui M.E."/>
            <person name="Frapy E."/>
            <person name="Garry L."/>
            <person name="Ghigo J.M."/>
            <person name="Gilles A.M."/>
            <person name="Johnson J."/>
            <person name="Le Bouguenec C."/>
            <person name="Lescat M."/>
            <person name="Mangenot S."/>
            <person name="Martinez-Jehanne V."/>
            <person name="Matic I."/>
            <person name="Nassif X."/>
            <person name="Oztas S."/>
            <person name="Petit M.A."/>
            <person name="Pichon C."/>
            <person name="Rouy Z."/>
            <person name="Ruf C.S."/>
            <person name="Schneider D."/>
            <person name="Tourret J."/>
            <person name="Vacherie B."/>
            <person name="Vallenet D."/>
            <person name="Medigue C."/>
            <person name="Rocha E.P.C."/>
            <person name="Denamur E."/>
        </authorList>
    </citation>
    <scope>NUCLEOTIDE SEQUENCE [LARGE SCALE GENOMIC DNA]</scope>
    <source>
        <strain>ED1a</strain>
    </source>
</reference>
<sequence>MLKTIQDKARHRTRPLWAWLKLLWQRIDEDNMTTLAGNLAYVSLLSLVPLVAVVFALFAAFPMFSDVSIQLRHFIFANFLPATGDVIQRYIEQFVANSNKMTAVGACGLIVTALLLMYSIDSALNTIWRSKRARPKIYSFAVYWMILTLGPLLAGASLAISSYLLSLRWASDLNTVIDNVLRIFPLLLSWISFWLLYSIVPTIRVPNRDAIVGAFVAALLFEAGKKGFALYITMFPSYQLIYGVLAVIPILFVWVYWTWCIVLLGAEITVTLGEYRKLKQAAEQEEDDEP</sequence>
<proteinExistence type="inferred from homology"/>
<name>YIHY_ECO81</name>
<accession>B7N2M7</accession>